<feature type="chain" id="PRO_0000121901" description="tRNA pseudouridine synthase B">
    <location>
        <begin position="1"/>
        <end position="303"/>
    </location>
</feature>
<feature type="active site" description="Nucleophile" evidence="1">
    <location>
        <position position="47"/>
    </location>
</feature>
<name>TRUB_RUEPO</name>
<accession>Q5LLT4</accession>
<organism>
    <name type="scientific">Ruegeria pomeroyi (strain ATCC 700808 / DSM 15171 / DSS-3)</name>
    <name type="common">Silicibacter pomeroyi</name>
    <dbReference type="NCBI Taxonomy" id="246200"/>
    <lineage>
        <taxon>Bacteria</taxon>
        <taxon>Pseudomonadati</taxon>
        <taxon>Pseudomonadota</taxon>
        <taxon>Alphaproteobacteria</taxon>
        <taxon>Rhodobacterales</taxon>
        <taxon>Roseobacteraceae</taxon>
        <taxon>Ruegeria</taxon>
    </lineage>
</organism>
<gene>
    <name evidence="1" type="primary">truB</name>
    <name type="ordered locus">SPO3837</name>
</gene>
<keyword id="KW-0413">Isomerase</keyword>
<keyword id="KW-1185">Reference proteome</keyword>
<keyword id="KW-0819">tRNA processing</keyword>
<comment type="function">
    <text evidence="1">Responsible for synthesis of pseudouridine from uracil-55 in the psi GC loop of transfer RNAs.</text>
</comment>
<comment type="catalytic activity">
    <reaction evidence="1">
        <text>uridine(55) in tRNA = pseudouridine(55) in tRNA</text>
        <dbReference type="Rhea" id="RHEA:42532"/>
        <dbReference type="Rhea" id="RHEA-COMP:10101"/>
        <dbReference type="Rhea" id="RHEA-COMP:10102"/>
        <dbReference type="ChEBI" id="CHEBI:65314"/>
        <dbReference type="ChEBI" id="CHEBI:65315"/>
        <dbReference type="EC" id="5.4.99.25"/>
    </reaction>
</comment>
<comment type="similarity">
    <text evidence="1">Belongs to the pseudouridine synthase TruB family. Type 1 subfamily.</text>
</comment>
<sequence length="303" mass="32826">MARKRKGRDISGWLVVDKPAGMTSTAVVNKVRWALGANKAGHAGTLDPEATGVLAIALGEATKTVPYITDALKAYVFTVRLGQATNTDDAEGEVIASSDLRPTDEQIKDALAPFLGDIMQVPPKFSAVKIDGQRAYKLARDGEDVELAARPLWVEELLMLDRPDPDHVLLEMTCGKGGYVRSIARDLGAALGCYGHVRELRRIWSGPFEAEDGITLEQVEALAKTPELDSYLRPLEEGLADLPELKCSPEGAQRLRNGNPGMVYPGEAEYGDEAWASFEGRAVAVGIYKSGELHPARVFARPE</sequence>
<reference key="1">
    <citation type="journal article" date="2004" name="Nature">
        <title>Genome sequence of Silicibacter pomeroyi reveals adaptations to the marine environment.</title>
        <authorList>
            <person name="Moran M.A."/>
            <person name="Buchan A."/>
            <person name="Gonzalez J.M."/>
            <person name="Heidelberg J.F."/>
            <person name="Whitman W.B."/>
            <person name="Kiene R.P."/>
            <person name="Henriksen J.R."/>
            <person name="King G.M."/>
            <person name="Belas R."/>
            <person name="Fuqua C."/>
            <person name="Brinkac L.M."/>
            <person name="Lewis M."/>
            <person name="Johri S."/>
            <person name="Weaver B."/>
            <person name="Pai G."/>
            <person name="Eisen J.A."/>
            <person name="Rahe E."/>
            <person name="Sheldon W.M."/>
            <person name="Ye W."/>
            <person name="Miller T.R."/>
            <person name="Carlton J."/>
            <person name="Rasko D.A."/>
            <person name="Paulsen I.T."/>
            <person name="Ren Q."/>
            <person name="Daugherty S.C."/>
            <person name="DeBoy R.T."/>
            <person name="Dodson R.J."/>
            <person name="Durkin A.S."/>
            <person name="Madupu R."/>
            <person name="Nelson W.C."/>
            <person name="Sullivan S.A."/>
            <person name="Rosovitz M.J."/>
            <person name="Haft D.H."/>
            <person name="Selengut J."/>
            <person name="Ward N."/>
        </authorList>
    </citation>
    <scope>NUCLEOTIDE SEQUENCE [LARGE SCALE GENOMIC DNA]</scope>
    <source>
        <strain>ATCC 700808 / DSM 15171 / DSS-3</strain>
    </source>
</reference>
<reference key="2">
    <citation type="journal article" date="2014" name="Stand. Genomic Sci.">
        <title>An updated genome annotation for the model marine bacterium Ruegeria pomeroyi DSS-3.</title>
        <authorList>
            <person name="Rivers A.R."/>
            <person name="Smith C.B."/>
            <person name="Moran M.A."/>
        </authorList>
    </citation>
    <scope>GENOME REANNOTATION</scope>
    <source>
        <strain>ATCC 700808 / DSM 15171 / DSS-3</strain>
    </source>
</reference>
<proteinExistence type="inferred from homology"/>
<protein>
    <recommendedName>
        <fullName evidence="1">tRNA pseudouridine synthase B</fullName>
        <ecNumber evidence="1">5.4.99.25</ecNumber>
    </recommendedName>
    <alternativeName>
        <fullName evidence="1">tRNA pseudouridine(55) synthase</fullName>
        <shortName evidence="1">Psi55 synthase</shortName>
    </alternativeName>
    <alternativeName>
        <fullName evidence="1">tRNA pseudouridylate synthase</fullName>
    </alternativeName>
    <alternativeName>
        <fullName evidence="1">tRNA-uridine isomerase</fullName>
    </alternativeName>
</protein>
<evidence type="ECO:0000255" key="1">
    <source>
        <dbReference type="HAMAP-Rule" id="MF_01080"/>
    </source>
</evidence>
<dbReference type="EC" id="5.4.99.25" evidence="1"/>
<dbReference type="EMBL" id="CP000031">
    <property type="protein sequence ID" value="AAV97051.1"/>
    <property type="molecule type" value="Genomic_DNA"/>
</dbReference>
<dbReference type="RefSeq" id="WP_011049508.1">
    <property type="nucleotide sequence ID" value="NC_003911.12"/>
</dbReference>
<dbReference type="SMR" id="Q5LLT4"/>
<dbReference type="STRING" id="246200.SPO3837"/>
<dbReference type="PaxDb" id="246200-SPO3837"/>
<dbReference type="KEGG" id="sil:SPO3837"/>
<dbReference type="eggNOG" id="COG0130">
    <property type="taxonomic scope" value="Bacteria"/>
</dbReference>
<dbReference type="HOGENOM" id="CLU_032087_0_3_5"/>
<dbReference type="OrthoDB" id="9802309at2"/>
<dbReference type="Proteomes" id="UP000001023">
    <property type="component" value="Chromosome"/>
</dbReference>
<dbReference type="GO" id="GO:0003723">
    <property type="term" value="F:RNA binding"/>
    <property type="evidence" value="ECO:0007669"/>
    <property type="project" value="InterPro"/>
</dbReference>
<dbReference type="GO" id="GO:0160148">
    <property type="term" value="F:tRNA pseudouridine(55) synthase activity"/>
    <property type="evidence" value="ECO:0007669"/>
    <property type="project" value="UniProtKB-EC"/>
</dbReference>
<dbReference type="GO" id="GO:1990481">
    <property type="term" value="P:mRNA pseudouridine synthesis"/>
    <property type="evidence" value="ECO:0007669"/>
    <property type="project" value="TreeGrafter"/>
</dbReference>
<dbReference type="GO" id="GO:0031119">
    <property type="term" value="P:tRNA pseudouridine synthesis"/>
    <property type="evidence" value="ECO:0007669"/>
    <property type="project" value="UniProtKB-UniRule"/>
</dbReference>
<dbReference type="CDD" id="cd02573">
    <property type="entry name" value="PseudoU_synth_EcTruB"/>
    <property type="match status" value="1"/>
</dbReference>
<dbReference type="Gene3D" id="3.30.2350.10">
    <property type="entry name" value="Pseudouridine synthase"/>
    <property type="match status" value="1"/>
</dbReference>
<dbReference type="HAMAP" id="MF_01080">
    <property type="entry name" value="TruB_bact"/>
    <property type="match status" value="1"/>
</dbReference>
<dbReference type="InterPro" id="IPR020103">
    <property type="entry name" value="PsdUridine_synth_cat_dom_sf"/>
</dbReference>
<dbReference type="InterPro" id="IPR002501">
    <property type="entry name" value="PsdUridine_synth_N"/>
</dbReference>
<dbReference type="InterPro" id="IPR014780">
    <property type="entry name" value="tRNA_psdUridine_synth_TruB"/>
</dbReference>
<dbReference type="InterPro" id="IPR032819">
    <property type="entry name" value="TruB_C"/>
</dbReference>
<dbReference type="NCBIfam" id="TIGR00431">
    <property type="entry name" value="TruB"/>
    <property type="match status" value="1"/>
</dbReference>
<dbReference type="PANTHER" id="PTHR13767:SF2">
    <property type="entry name" value="PSEUDOURIDYLATE SYNTHASE TRUB1"/>
    <property type="match status" value="1"/>
</dbReference>
<dbReference type="PANTHER" id="PTHR13767">
    <property type="entry name" value="TRNA-PSEUDOURIDINE SYNTHASE"/>
    <property type="match status" value="1"/>
</dbReference>
<dbReference type="Pfam" id="PF16198">
    <property type="entry name" value="TruB_C_2"/>
    <property type="match status" value="1"/>
</dbReference>
<dbReference type="Pfam" id="PF01509">
    <property type="entry name" value="TruB_N"/>
    <property type="match status" value="1"/>
</dbReference>
<dbReference type="SUPFAM" id="SSF55120">
    <property type="entry name" value="Pseudouridine synthase"/>
    <property type="match status" value="1"/>
</dbReference>